<dbReference type="EC" id="2.1.2.11" evidence="1"/>
<dbReference type="EMBL" id="CP000139">
    <property type="protein sequence ID" value="ABR40396.1"/>
    <property type="molecule type" value="Genomic_DNA"/>
</dbReference>
<dbReference type="RefSeq" id="WP_005843276.1">
    <property type="nucleotide sequence ID" value="NZ_JANSWM010000047.1"/>
</dbReference>
<dbReference type="SMR" id="A6L3Y2"/>
<dbReference type="STRING" id="435590.BVU_2746"/>
<dbReference type="PaxDb" id="435590-BVU_2746"/>
<dbReference type="GeneID" id="5303709"/>
<dbReference type="KEGG" id="bvu:BVU_2746"/>
<dbReference type="eggNOG" id="COG0413">
    <property type="taxonomic scope" value="Bacteria"/>
</dbReference>
<dbReference type="HOGENOM" id="CLU_036645_1_0_10"/>
<dbReference type="BioCyc" id="BVUL435590:G1G59-2857-MONOMER"/>
<dbReference type="UniPathway" id="UPA00028">
    <property type="reaction ID" value="UER00003"/>
</dbReference>
<dbReference type="Proteomes" id="UP000002861">
    <property type="component" value="Chromosome"/>
</dbReference>
<dbReference type="GO" id="GO:0005737">
    <property type="term" value="C:cytoplasm"/>
    <property type="evidence" value="ECO:0007669"/>
    <property type="project" value="UniProtKB-SubCell"/>
</dbReference>
<dbReference type="GO" id="GO:0003864">
    <property type="term" value="F:3-methyl-2-oxobutanoate hydroxymethyltransferase activity"/>
    <property type="evidence" value="ECO:0007669"/>
    <property type="project" value="UniProtKB-UniRule"/>
</dbReference>
<dbReference type="GO" id="GO:0000287">
    <property type="term" value="F:magnesium ion binding"/>
    <property type="evidence" value="ECO:0007669"/>
    <property type="project" value="TreeGrafter"/>
</dbReference>
<dbReference type="GO" id="GO:0015940">
    <property type="term" value="P:pantothenate biosynthetic process"/>
    <property type="evidence" value="ECO:0007669"/>
    <property type="project" value="UniProtKB-UniRule"/>
</dbReference>
<dbReference type="CDD" id="cd06557">
    <property type="entry name" value="KPHMT-like"/>
    <property type="match status" value="1"/>
</dbReference>
<dbReference type="FunFam" id="3.20.20.60:FF:000017">
    <property type="entry name" value="3-methyl-2-oxobutanoate hydroxymethyltransferase"/>
    <property type="match status" value="1"/>
</dbReference>
<dbReference type="Gene3D" id="3.20.20.60">
    <property type="entry name" value="Phosphoenolpyruvate-binding domains"/>
    <property type="match status" value="1"/>
</dbReference>
<dbReference type="HAMAP" id="MF_00156">
    <property type="entry name" value="PanB"/>
    <property type="match status" value="1"/>
</dbReference>
<dbReference type="InterPro" id="IPR003700">
    <property type="entry name" value="Pantoate_hydroxy_MeTrfase"/>
</dbReference>
<dbReference type="InterPro" id="IPR015813">
    <property type="entry name" value="Pyrv/PenolPyrv_kinase-like_dom"/>
</dbReference>
<dbReference type="InterPro" id="IPR040442">
    <property type="entry name" value="Pyrv_kinase-like_dom_sf"/>
</dbReference>
<dbReference type="NCBIfam" id="TIGR00222">
    <property type="entry name" value="panB"/>
    <property type="match status" value="1"/>
</dbReference>
<dbReference type="NCBIfam" id="NF001452">
    <property type="entry name" value="PRK00311.1"/>
    <property type="match status" value="1"/>
</dbReference>
<dbReference type="PANTHER" id="PTHR20881">
    <property type="entry name" value="3-METHYL-2-OXOBUTANOATE HYDROXYMETHYLTRANSFERASE"/>
    <property type="match status" value="1"/>
</dbReference>
<dbReference type="PANTHER" id="PTHR20881:SF0">
    <property type="entry name" value="3-METHYL-2-OXOBUTANOATE HYDROXYMETHYLTRANSFERASE"/>
    <property type="match status" value="1"/>
</dbReference>
<dbReference type="Pfam" id="PF02548">
    <property type="entry name" value="Pantoate_transf"/>
    <property type="match status" value="1"/>
</dbReference>
<dbReference type="PIRSF" id="PIRSF000388">
    <property type="entry name" value="Pantoate_hydroxy_MeTrfase"/>
    <property type="match status" value="1"/>
</dbReference>
<dbReference type="SUPFAM" id="SSF51621">
    <property type="entry name" value="Phosphoenolpyruvate/pyruvate domain"/>
    <property type="match status" value="1"/>
</dbReference>
<name>PANB_PHOV8</name>
<proteinExistence type="inferred from homology"/>
<organism>
    <name type="scientific">Phocaeicola vulgatus (strain ATCC 8482 / DSM 1447 / JCM 5826 / CCUG 4940 / NBRC 14291 / NCTC 11154)</name>
    <name type="common">Bacteroides vulgatus</name>
    <dbReference type="NCBI Taxonomy" id="435590"/>
    <lineage>
        <taxon>Bacteria</taxon>
        <taxon>Pseudomonadati</taxon>
        <taxon>Bacteroidota</taxon>
        <taxon>Bacteroidia</taxon>
        <taxon>Bacteroidales</taxon>
        <taxon>Bacteroidaceae</taxon>
        <taxon>Phocaeicola</taxon>
    </lineage>
</organism>
<sequence>MAGYISGDTRKVTTHRLVEMKQRGEKISMLTSYDYTTAQIVDGAGIDVILVGDSASNVMAGNVTTLPITLDQMIYHGKSVVRGVKRALVVVDLPFGTYQTSEYEAVTNAIKVMKITHADALKLEGGVEIIDAVKKIIAAGIPIMGHLGLMPQSINKYGTYTVRAKDEEEAEKLLSDAHLLEETGCFALVLEKIPASLAERVARELTIPVIGIGAGGAVDGQVLVVSDMLGMTNGFSPRFLRRYADLHTVMTGAIQQYVDDVKKGDFPNEDEQY</sequence>
<keyword id="KW-0963">Cytoplasm</keyword>
<keyword id="KW-0460">Magnesium</keyword>
<keyword id="KW-0479">Metal-binding</keyword>
<keyword id="KW-0566">Pantothenate biosynthesis</keyword>
<keyword id="KW-0808">Transferase</keyword>
<evidence type="ECO:0000255" key="1">
    <source>
        <dbReference type="HAMAP-Rule" id="MF_00156"/>
    </source>
</evidence>
<feature type="chain" id="PRO_1000011362" description="3-methyl-2-oxobutanoate hydroxymethyltransferase">
    <location>
        <begin position="1"/>
        <end position="273"/>
    </location>
</feature>
<feature type="active site" description="Proton acceptor" evidence="1">
    <location>
        <position position="191"/>
    </location>
</feature>
<feature type="binding site" evidence="1">
    <location>
        <begin position="53"/>
        <end position="54"/>
    </location>
    <ligand>
        <name>3-methyl-2-oxobutanoate</name>
        <dbReference type="ChEBI" id="CHEBI:11851"/>
    </ligand>
</feature>
<feature type="binding site" evidence="1">
    <location>
        <position position="53"/>
    </location>
    <ligand>
        <name>Mg(2+)</name>
        <dbReference type="ChEBI" id="CHEBI:18420"/>
    </ligand>
</feature>
<feature type="binding site" evidence="1">
    <location>
        <position position="92"/>
    </location>
    <ligand>
        <name>3-methyl-2-oxobutanoate</name>
        <dbReference type="ChEBI" id="CHEBI:11851"/>
    </ligand>
</feature>
<feature type="binding site" evidence="1">
    <location>
        <position position="92"/>
    </location>
    <ligand>
        <name>Mg(2+)</name>
        <dbReference type="ChEBI" id="CHEBI:18420"/>
    </ligand>
</feature>
<feature type="binding site" evidence="1">
    <location>
        <position position="122"/>
    </location>
    <ligand>
        <name>3-methyl-2-oxobutanoate</name>
        <dbReference type="ChEBI" id="CHEBI:11851"/>
    </ligand>
</feature>
<feature type="binding site" evidence="1">
    <location>
        <position position="124"/>
    </location>
    <ligand>
        <name>Mg(2+)</name>
        <dbReference type="ChEBI" id="CHEBI:18420"/>
    </ligand>
</feature>
<gene>
    <name evidence="1" type="primary">panB</name>
    <name type="ordered locus">BVU_2746</name>
</gene>
<comment type="function">
    <text evidence="1">Catalyzes the reversible reaction in which hydroxymethyl group from 5,10-methylenetetrahydrofolate is transferred onto alpha-ketoisovalerate to form ketopantoate.</text>
</comment>
<comment type="catalytic activity">
    <reaction evidence="1">
        <text>3-methyl-2-oxobutanoate + (6R)-5,10-methylene-5,6,7,8-tetrahydrofolate + H2O = 2-dehydropantoate + (6S)-5,6,7,8-tetrahydrofolate</text>
        <dbReference type="Rhea" id="RHEA:11824"/>
        <dbReference type="ChEBI" id="CHEBI:11561"/>
        <dbReference type="ChEBI" id="CHEBI:11851"/>
        <dbReference type="ChEBI" id="CHEBI:15377"/>
        <dbReference type="ChEBI" id="CHEBI:15636"/>
        <dbReference type="ChEBI" id="CHEBI:57453"/>
        <dbReference type="EC" id="2.1.2.11"/>
    </reaction>
</comment>
<comment type="cofactor">
    <cofactor evidence="1">
        <name>Mg(2+)</name>
        <dbReference type="ChEBI" id="CHEBI:18420"/>
    </cofactor>
    <text evidence="1">Binds 1 Mg(2+) ion per subunit.</text>
</comment>
<comment type="pathway">
    <text evidence="1">Cofactor biosynthesis; (R)-pantothenate biosynthesis; (R)-pantoate from 3-methyl-2-oxobutanoate: step 1/2.</text>
</comment>
<comment type="subunit">
    <text evidence="1">Homodecamer; pentamer of dimers.</text>
</comment>
<comment type="subcellular location">
    <subcellularLocation>
        <location evidence="1">Cytoplasm</location>
    </subcellularLocation>
</comment>
<comment type="similarity">
    <text evidence="1">Belongs to the PanB family.</text>
</comment>
<accession>A6L3Y2</accession>
<reference key="1">
    <citation type="journal article" date="2007" name="PLoS Biol.">
        <title>Evolution of symbiotic bacteria in the distal human intestine.</title>
        <authorList>
            <person name="Xu J."/>
            <person name="Mahowald M.A."/>
            <person name="Ley R.E."/>
            <person name="Lozupone C.A."/>
            <person name="Hamady M."/>
            <person name="Martens E.C."/>
            <person name="Henrissat B."/>
            <person name="Coutinho P.M."/>
            <person name="Minx P."/>
            <person name="Latreille P."/>
            <person name="Cordum H."/>
            <person name="Van Brunt A."/>
            <person name="Kim K."/>
            <person name="Fulton R.S."/>
            <person name="Fulton L.A."/>
            <person name="Clifton S.W."/>
            <person name="Wilson R.K."/>
            <person name="Knight R.D."/>
            <person name="Gordon J.I."/>
        </authorList>
    </citation>
    <scope>NUCLEOTIDE SEQUENCE [LARGE SCALE GENOMIC DNA]</scope>
    <source>
        <strain>ATCC 8482 / DSM 1447 / JCM 5826 / CCUG 4940 / NBRC 14291 / NCTC 11154</strain>
    </source>
</reference>
<protein>
    <recommendedName>
        <fullName evidence="1">3-methyl-2-oxobutanoate hydroxymethyltransferase</fullName>
        <ecNumber evidence="1">2.1.2.11</ecNumber>
    </recommendedName>
    <alternativeName>
        <fullName evidence="1">Ketopantoate hydroxymethyltransferase</fullName>
        <shortName evidence="1">KPHMT</shortName>
    </alternativeName>
</protein>